<organism>
    <name type="scientific">Schizosaccharomyces pombe (strain 972 / ATCC 24843)</name>
    <name type="common">Fission yeast</name>
    <dbReference type="NCBI Taxonomy" id="284812"/>
    <lineage>
        <taxon>Eukaryota</taxon>
        <taxon>Fungi</taxon>
        <taxon>Dikarya</taxon>
        <taxon>Ascomycota</taxon>
        <taxon>Taphrinomycotina</taxon>
        <taxon>Schizosaccharomycetes</taxon>
        <taxon>Schizosaccharomycetales</taxon>
        <taxon>Schizosaccharomycetaceae</taxon>
        <taxon>Schizosaccharomyces</taxon>
    </lineage>
</organism>
<name>CO111_SCHPO</name>
<evidence type="ECO:0000250" key="1"/>
<evidence type="ECO:0000250" key="2">
    <source>
        <dbReference type="UniProtKB" id="P19516"/>
    </source>
</evidence>
<evidence type="ECO:0000250" key="3">
    <source>
        <dbReference type="UniProtKB" id="P36056"/>
    </source>
</evidence>
<evidence type="ECO:0000250" key="4">
    <source>
        <dbReference type="UniProtKB" id="Q9H7H0"/>
    </source>
</evidence>
<evidence type="ECO:0000255" key="5"/>
<evidence type="ECO:0000269" key="6">
    <source>
    </source>
</evidence>
<evidence type="ECO:0000305" key="7"/>
<proteinExistence type="evidence at protein level"/>
<accession>Q9UTM2</accession>
<protein>
    <recommendedName>
        <fullName>Rsm22-cox11 tandem protein 1, mitochondrial</fullName>
    </recommendedName>
    <component>
        <recommendedName>
            <fullName>Ribosome assembly protein Rsm22-1</fullName>
        </recommendedName>
    </component>
    <component>
        <recommendedName>
            <fullName>Cytochrome c oxidase assembly protein cox11-1</fullName>
        </recommendedName>
    </component>
</protein>
<keyword id="KW-0408">Iron</keyword>
<keyword id="KW-0411">Iron-sulfur</keyword>
<keyword id="KW-0472">Membrane</keyword>
<keyword id="KW-0479">Metal-binding</keyword>
<keyword id="KW-0496">Mitochondrion</keyword>
<keyword id="KW-0999">Mitochondrion inner membrane</keyword>
<keyword id="KW-1185">Reference proteome</keyword>
<keyword id="KW-0809">Transit peptide</keyword>
<keyword id="KW-0812">Transmembrane</keyword>
<keyword id="KW-1133">Transmembrane helix</keyword>
<sequence length="753" mass="86175">MPILTCRYKILFLYNLRNCFTFQNQRCLIPYGTTTTIRWYNANFQAVQNNFSDYKNELISSHRPEASSLLDFLVKDQKKSGDISLHTKFNLYVDDLLKKSEKGQIKKFINDIKKDLATESQLPLSAPFKDESTRTMTDPQVLAYIHQSMPYQYASLYSVLTDLKIVNSDVSCKSQHILDCGKGPGIGALASYSVFPTPNSVSIVEENPFLKKIIYDIHHNIYPSTSPNPTSPVTLNRLPLGKKDSYTLVIASNKLLEMKSEKELFDYLRSLWSLVSNDGGLLVLCERGTKRGFSLIQRARTFLLQKSKNTSDKQFNAHIVAPCPHDGRCPIDIENGVRANICSFKQHFFLSPFSRLYVPRSHRRSSDRSHYSYVVIQKGITRPLNNTTQRFKNDEDLLENVNVTSPTLKNWPRIIRPPLKRDGHVIIDVCDSDARLRRNIVPKSQGKLAYRLARKSAWGDLFPLEGKVQSTSPSSKITKHLKDASSTYSINPPSYNKPKVERNTTADPIFVGKRFYSTNRHKAFSRFADFNSHRFPCIFTSFSCYNCISGTRKYSRQYSRDKFHYNQRTTIYYLVAISIFALGLTYAAVPLYRLFCSKTGYGGTLNTDQSRMNAERMVPRKDNKRIRVTFNGDVAGNLSWKLWPQQREIYVLPGETALGFYTAENTSDHDIVGVATYNIVPGQAAVYFSKVACFCFEEQKLDAHEKVDLPVFFFIDPEFADDPNMKDIDDILLSYTFFEARYDTNGNLLTKLN</sequence>
<dbReference type="EMBL" id="CU329670">
    <property type="protein sequence ID" value="CAB57323.2"/>
    <property type="molecule type" value="Genomic_DNA"/>
</dbReference>
<dbReference type="RefSeq" id="NP_593279.2">
    <property type="nucleotide sequence ID" value="NM_001018675.2"/>
</dbReference>
<dbReference type="SMR" id="Q9UTM2"/>
<dbReference type="BioGRID" id="279274">
    <property type="interactions" value="2"/>
</dbReference>
<dbReference type="FunCoup" id="Q9UTM2">
    <property type="interactions" value="67"/>
</dbReference>
<dbReference type="STRING" id="284812.Q9UTM2"/>
<dbReference type="PaxDb" id="4896-SPAC1420.04c.1"/>
<dbReference type="EnsemblFungi" id="SPAC1420.04c.1">
    <property type="protein sequence ID" value="SPAC1420.04c.1:pep"/>
    <property type="gene ID" value="SPAC1420.04c"/>
</dbReference>
<dbReference type="GeneID" id="2542827"/>
<dbReference type="KEGG" id="spo:2542827"/>
<dbReference type="PomBase" id="SPAC1420.04c">
    <property type="gene designation" value="cox1101"/>
</dbReference>
<dbReference type="VEuPathDB" id="FungiDB:SPAC1420.04c"/>
<dbReference type="eggNOG" id="KOG2539">
    <property type="taxonomic scope" value="Eukaryota"/>
</dbReference>
<dbReference type="eggNOG" id="KOG2540">
    <property type="taxonomic scope" value="Eukaryota"/>
</dbReference>
<dbReference type="HOGENOM" id="CLU_425883_0_0_1"/>
<dbReference type="InParanoid" id="Q9UTM2"/>
<dbReference type="OMA" id="LPWKEES"/>
<dbReference type="PhylomeDB" id="Q9UTM2"/>
<dbReference type="PRO" id="PR:Q9UTM2"/>
<dbReference type="Proteomes" id="UP000002485">
    <property type="component" value="Chromosome I"/>
</dbReference>
<dbReference type="GO" id="GO:0005743">
    <property type="term" value="C:mitochondrial inner membrane"/>
    <property type="evidence" value="ECO:0000314"/>
    <property type="project" value="PomBase"/>
</dbReference>
<dbReference type="GO" id="GO:0005759">
    <property type="term" value="C:mitochondrial matrix"/>
    <property type="evidence" value="ECO:0000314"/>
    <property type="project" value="PomBase"/>
</dbReference>
<dbReference type="GO" id="GO:0005739">
    <property type="term" value="C:mitochondrion"/>
    <property type="evidence" value="ECO:0007005"/>
    <property type="project" value="PomBase"/>
</dbReference>
<dbReference type="GO" id="GO:0005507">
    <property type="term" value="F:copper ion binding"/>
    <property type="evidence" value="ECO:0000266"/>
    <property type="project" value="PomBase"/>
</dbReference>
<dbReference type="GO" id="GO:0051536">
    <property type="term" value="F:iron-sulfur cluster binding"/>
    <property type="evidence" value="ECO:0007669"/>
    <property type="project" value="UniProtKB-KW"/>
</dbReference>
<dbReference type="GO" id="GO:0008168">
    <property type="term" value="F:methyltransferase activity"/>
    <property type="evidence" value="ECO:0000255"/>
    <property type="project" value="PomBase"/>
</dbReference>
<dbReference type="GO" id="GO:0033617">
    <property type="term" value="P:mitochondrial cytochrome c oxidase assembly"/>
    <property type="evidence" value="ECO:0000266"/>
    <property type="project" value="PomBase"/>
</dbReference>
<dbReference type="GO" id="GO:0032543">
    <property type="term" value="P:mitochondrial translation"/>
    <property type="evidence" value="ECO:0000303"/>
    <property type="project" value="PomBase"/>
</dbReference>
<dbReference type="FunFam" id="2.60.370.10:FF:000001">
    <property type="entry name" value="COX11 cytochrome c oxidase assembly homolog"/>
    <property type="match status" value="1"/>
</dbReference>
<dbReference type="Gene3D" id="2.60.370.10">
    <property type="entry name" value="Ctag/Cox11"/>
    <property type="match status" value="1"/>
</dbReference>
<dbReference type="HAMAP" id="MF_00155">
    <property type="entry name" value="CtaG"/>
    <property type="match status" value="1"/>
</dbReference>
<dbReference type="InterPro" id="IPR023471">
    <property type="entry name" value="CtaG/Cox11_dom_sf"/>
</dbReference>
<dbReference type="InterPro" id="IPR007533">
    <property type="entry name" value="Cyt_c_oxidase_assmbl_CtaG"/>
</dbReference>
<dbReference type="InterPro" id="IPR015324">
    <property type="entry name" value="Ribosomal_Rsm22-like"/>
</dbReference>
<dbReference type="NCBIfam" id="NF003465">
    <property type="entry name" value="PRK05089.1"/>
    <property type="match status" value="1"/>
</dbReference>
<dbReference type="PANTHER" id="PTHR21320:SF3">
    <property type="entry name" value="CYTOCHROME C OXIDASE ASSEMBLY PROTEIN COX11, MITOCHONDRIAL-RELATED"/>
    <property type="match status" value="1"/>
</dbReference>
<dbReference type="PANTHER" id="PTHR21320">
    <property type="entry name" value="CYTOCHROME C OXIDASE ASSEMBLY PROTEIN COX11-RELATED"/>
    <property type="match status" value="1"/>
</dbReference>
<dbReference type="Pfam" id="PF04442">
    <property type="entry name" value="CtaG_Cox11"/>
    <property type="match status" value="1"/>
</dbReference>
<dbReference type="Pfam" id="PF09243">
    <property type="entry name" value="Rsm22"/>
    <property type="match status" value="1"/>
</dbReference>
<dbReference type="SUPFAM" id="SSF110111">
    <property type="entry name" value="Ctag/Cox11"/>
    <property type="match status" value="1"/>
</dbReference>
<reference key="1">
    <citation type="journal article" date="2002" name="Nature">
        <title>The genome sequence of Schizosaccharomyces pombe.</title>
        <authorList>
            <person name="Wood V."/>
            <person name="Gwilliam R."/>
            <person name="Rajandream M.A."/>
            <person name="Lyne M.H."/>
            <person name="Lyne R."/>
            <person name="Stewart A."/>
            <person name="Sgouros J.G."/>
            <person name="Peat N."/>
            <person name="Hayles J."/>
            <person name="Baker S.G."/>
            <person name="Basham D."/>
            <person name="Bowman S."/>
            <person name="Brooks K."/>
            <person name="Brown D."/>
            <person name="Brown S."/>
            <person name="Chillingworth T."/>
            <person name="Churcher C.M."/>
            <person name="Collins M."/>
            <person name="Connor R."/>
            <person name="Cronin A."/>
            <person name="Davis P."/>
            <person name="Feltwell T."/>
            <person name="Fraser A."/>
            <person name="Gentles S."/>
            <person name="Goble A."/>
            <person name="Hamlin N."/>
            <person name="Harris D.E."/>
            <person name="Hidalgo J."/>
            <person name="Hodgson G."/>
            <person name="Holroyd S."/>
            <person name="Hornsby T."/>
            <person name="Howarth S."/>
            <person name="Huckle E.J."/>
            <person name="Hunt S."/>
            <person name="Jagels K."/>
            <person name="James K.D."/>
            <person name="Jones L."/>
            <person name="Jones M."/>
            <person name="Leather S."/>
            <person name="McDonald S."/>
            <person name="McLean J."/>
            <person name="Mooney P."/>
            <person name="Moule S."/>
            <person name="Mungall K.L."/>
            <person name="Murphy L.D."/>
            <person name="Niblett D."/>
            <person name="Odell C."/>
            <person name="Oliver K."/>
            <person name="O'Neil S."/>
            <person name="Pearson D."/>
            <person name="Quail M.A."/>
            <person name="Rabbinowitsch E."/>
            <person name="Rutherford K.M."/>
            <person name="Rutter S."/>
            <person name="Saunders D."/>
            <person name="Seeger K."/>
            <person name="Sharp S."/>
            <person name="Skelton J."/>
            <person name="Simmonds M.N."/>
            <person name="Squares R."/>
            <person name="Squares S."/>
            <person name="Stevens K."/>
            <person name="Taylor K."/>
            <person name="Taylor R.G."/>
            <person name="Tivey A."/>
            <person name="Walsh S.V."/>
            <person name="Warren T."/>
            <person name="Whitehead S."/>
            <person name="Woodward J.R."/>
            <person name="Volckaert G."/>
            <person name="Aert R."/>
            <person name="Robben J."/>
            <person name="Grymonprez B."/>
            <person name="Weltjens I."/>
            <person name="Vanstreels E."/>
            <person name="Rieger M."/>
            <person name="Schaefer M."/>
            <person name="Mueller-Auer S."/>
            <person name="Gabel C."/>
            <person name="Fuchs M."/>
            <person name="Duesterhoeft A."/>
            <person name="Fritzc C."/>
            <person name="Holzer E."/>
            <person name="Moestl D."/>
            <person name="Hilbert H."/>
            <person name="Borzym K."/>
            <person name="Langer I."/>
            <person name="Beck A."/>
            <person name="Lehrach H."/>
            <person name="Reinhardt R."/>
            <person name="Pohl T.M."/>
            <person name="Eger P."/>
            <person name="Zimmermann W."/>
            <person name="Wedler H."/>
            <person name="Wambutt R."/>
            <person name="Purnelle B."/>
            <person name="Goffeau A."/>
            <person name="Cadieu E."/>
            <person name="Dreano S."/>
            <person name="Gloux S."/>
            <person name="Lelaure V."/>
            <person name="Mottier S."/>
            <person name="Galibert F."/>
            <person name="Aves S.J."/>
            <person name="Xiang Z."/>
            <person name="Hunt C."/>
            <person name="Moore K."/>
            <person name="Hurst S.M."/>
            <person name="Lucas M."/>
            <person name="Rochet M."/>
            <person name="Gaillardin C."/>
            <person name="Tallada V.A."/>
            <person name="Garzon A."/>
            <person name="Thode G."/>
            <person name="Daga R.R."/>
            <person name="Cruzado L."/>
            <person name="Jimenez J."/>
            <person name="Sanchez M."/>
            <person name="del Rey F."/>
            <person name="Benito J."/>
            <person name="Dominguez A."/>
            <person name="Revuelta J.L."/>
            <person name="Moreno S."/>
            <person name="Armstrong J."/>
            <person name="Forsburg S.L."/>
            <person name="Cerutti L."/>
            <person name="Lowe T."/>
            <person name="McCombie W.R."/>
            <person name="Paulsen I."/>
            <person name="Potashkin J."/>
            <person name="Shpakovski G.V."/>
            <person name="Ussery D."/>
            <person name="Barrell B.G."/>
            <person name="Nurse P."/>
        </authorList>
    </citation>
    <scope>NUCLEOTIDE SEQUENCE [LARGE SCALE GENOMIC DNA]</scope>
    <source>
        <strain>972 / ATCC 24843</strain>
    </source>
</reference>
<reference key="2">
    <citation type="journal article" date="2006" name="Eukaryot. Cell">
        <title>Sequential processing of a mitochondrial tandem protein: insights into protein import in Schizosaccharomyces pombe.</title>
        <authorList>
            <person name="Khalimonchuk O."/>
            <person name="Ott M."/>
            <person name="Funes S."/>
            <person name="Ostermann K."/>
            <person name="Roedel G."/>
            <person name="Herrmann J.M."/>
        </authorList>
    </citation>
    <scope>PROTEOLYTIC CLEAVAGE</scope>
    <scope>SUBCELLULAR LOCATION</scope>
</reference>
<reference key="3">
    <citation type="journal article" date="2006" name="Nat. Biotechnol.">
        <title>ORFeome cloning and global analysis of protein localization in the fission yeast Schizosaccharomyces pombe.</title>
        <authorList>
            <person name="Matsuyama A."/>
            <person name="Arai R."/>
            <person name="Yashiroda Y."/>
            <person name="Shirai A."/>
            <person name="Kamata A."/>
            <person name="Sekido S."/>
            <person name="Kobayashi Y."/>
            <person name="Hashimoto A."/>
            <person name="Hamamoto M."/>
            <person name="Hiraoka Y."/>
            <person name="Horinouchi S."/>
            <person name="Yoshida M."/>
        </authorList>
    </citation>
    <scope>SUBCELLULAR LOCATION [LARGE SCALE ANALYSIS]</scope>
</reference>
<comment type="function">
    <molecule>Ribosome assembly protein Rsm22-1</molecule>
    <text evidence="3 4">Mitochondrial ribosome (mitoribosome) assembly factor. Binds at the interface of the head and body domains of the mitochondrial small ribosomal subunit (mt-SSU), occluding the mRNA channel and preventing compaction of the head domain towards the body (By similarity). Probable inactive methyltransferase: retains the characteristic folding and ability to bind S-adenosyl-L-methionine, but it probably lost its methyltransferase activity (By similarity).</text>
</comment>
<comment type="function">
    <molecule>Cytochrome c oxidase assembly protein cox11-1</molecule>
    <text evidence="1">Exerts its effect at some terminal stage of cytochrome c oxidase synthesis, probably by being involved in the insertion of the copper B into subunit I.</text>
</comment>
<comment type="subunit">
    <molecule>Ribosome assembly protein Rsm22-1</molecule>
    <text evidence="3">Associates with the mitochondrial ribosome (mitoribosome). Only transiently interacts with the mitoribosome.</text>
</comment>
<comment type="subcellular location">
    <molecule>Ribosome assembly protein Rsm22-1</molecule>
    <subcellularLocation>
        <location evidence="3">Mitochondrion</location>
    </subcellularLocation>
</comment>
<comment type="subcellular location">
    <molecule>Cytochrome c oxidase assembly protein cox11-1</molecule>
    <subcellularLocation>
        <location evidence="2">Mitochondrion inner membrane</location>
        <topology evidence="2">Single-pass membrane protein</topology>
        <orientation evidence="2">Intermembrane side</orientation>
    </subcellularLocation>
    <text evidence="2">Intrinsic component of the inner-membrane.</text>
</comment>
<comment type="PTM">
    <text evidence="6">Specific enzymatic cleavages in vivo by mitochondrial processing peptidase (MPP) yield mature proteins including rsm22-1 and cox11-1.</text>
</comment>
<comment type="similarity">
    <text evidence="7">In the N-terminal section; belongs to the methyltransferase superfamily. Rsm22 family.</text>
</comment>
<comment type="similarity">
    <text evidence="7">In the C-terminal section; belongs to the COX11/CtaG family.</text>
</comment>
<feature type="transit peptide" description="Mitochondrion" evidence="5">
    <location>
        <begin position="1"/>
        <end position="39"/>
    </location>
</feature>
<feature type="chain" id="PRO_0000352836" description="Rsm22-cox11 tandem protein 1, mitochondrial">
    <location>
        <begin position="40"/>
        <end position="753"/>
    </location>
</feature>
<feature type="chain" id="PRO_0000352837" description="Ribosome assembly protein Rsm22-1">
    <location>
        <begin position="40"/>
        <end position="568"/>
    </location>
</feature>
<feature type="chain" id="PRO_0000352838" description="Cytochrome c oxidase assembly protein cox11-1">
    <location>
        <begin position="569"/>
        <end position="753"/>
    </location>
</feature>
<feature type="transmembrane region" description="Helical" evidence="5">
    <location>
        <begin position="571"/>
        <end position="591"/>
    </location>
</feature>
<feature type="topological domain" description="Mitochondrial intermembrane" evidence="1">
    <location>
        <begin position="592"/>
        <end position="753"/>
    </location>
</feature>
<feature type="binding site" evidence="4">
    <location>
        <position position="323"/>
    </location>
    <ligand>
        <name>[4Fe-4S] cluster</name>
        <dbReference type="ChEBI" id="CHEBI:49883"/>
    </ligand>
</feature>
<feature type="binding site" evidence="4">
    <location>
        <position position="329"/>
    </location>
    <ligand>
        <name>[4Fe-4S] cluster</name>
        <dbReference type="ChEBI" id="CHEBI:49883"/>
    </ligand>
</feature>
<feature type="binding site" evidence="4">
    <location>
        <position position="342"/>
    </location>
    <ligand>
        <name>[4Fe-4S] cluster</name>
        <dbReference type="ChEBI" id="CHEBI:49883"/>
    </ligand>
</feature>
<feature type="binding site" evidence="4">
    <location>
        <position position="430"/>
    </location>
    <ligand>
        <name>[4Fe-4S] cluster</name>
        <dbReference type="ChEBI" id="CHEBI:49883"/>
    </ligand>
</feature>
<feature type="site" description="Cleavage; by mitochondrial processing peptidase">
    <location>
        <begin position="568"/>
        <end position="569"/>
    </location>
</feature>
<gene>
    <name type="primary">cox1101</name>
    <name type="synonym">cox11</name>
    <name type="synonym">cox11-a</name>
    <name type="ORF">SPAC1420.04c</name>
    <name type="ORF">SPAPB17E12.01c</name>
</gene>